<gene>
    <name evidence="5" type="primary">MCTP6</name>
    <name evidence="7" type="ordered locus">At1g22610</name>
    <name evidence="9" type="ORF">F12K8.4</name>
    <name evidence="8" type="ORF">T22J18.21</name>
</gene>
<comment type="function">
    <text evidence="4 5">Regulates flowering time under long days (PubMed:29259105). May function as a signaling molecule by regulating the trafficking of other regulators (PubMed:29259105).</text>
</comment>
<comment type="cofactor">
    <cofactor evidence="2">
        <name>Ca(2+)</name>
        <dbReference type="ChEBI" id="CHEBI:29108"/>
    </cofactor>
</comment>
<comment type="subcellular location">
    <subcellularLocation>
        <location evidence="4">Cell membrane</location>
        <topology evidence="1">Multi-pass membrane protein</topology>
    </subcellularLocation>
    <subcellularLocation>
        <location evidence="4">Cytoplasm</location>
    </subcellularLocation>
    <subcellularLocation>
        <location evidence="4">Endosome membrane</location>
        <topology evidence="1">Multi-pass membrane protein</topology>
    </subcellularLocation>
</comment>
<comment type="tissue specificity">
    <text evidence="4">Expressed in the vascular tissues of cotyledons and rosette leaves (PubMed:29259105). Accumulates in roots caps and shoot apical meristems (SAMs) (PubMed:29259105). Observed in flowers (PubMed:29259105).</text>
</comment>
<comment type="developmental stage">
    <text evidence="4">Present in developing flowers, particularly in pistils.</text>
</comment>
<comment type="disruption phenotype">
    <text evidence="4">Enhanced late-flowering phenotype of the ftip1 mutant.</text>
</comment>
<comment type="similarity">
    <text evidence="6">Belongs to the MCTP family.</text>
</comment>
<comment type="sequence caution" evidence="6">
    <conflict type="erroneous gene model prediction">
        <sequence resource="EMBL-CDS" id="AAC25524"/>
    </conflict>
</comment>
<feature type="chain" id="PRO_0000457900" description="Multiple C2 domain and transmembrane region protein 6">
    <location>
        <begin position="1"/>
        <end position="1029"/>
    </location>
</feature>
<feature type="transmembrane region" description="Helical" evidence="1">
    <location>
        <begin position="864"/>
        <end position="884"/>
    </location>
</feature>
<feature type="transmembrane region" description="Helical" evidence="1">
    <location>
        <begin position="976"/>
        <end position="996"/>
    </location>
</feature>
<feature type="domain" description="C2 1" evidence="2">
    <location>
        <begin position="1"/>
        <end position="111"/>
    </location>
</feature>
<feature type="domain" description="C2 2" evidence="2">
    <location>
        <begin position="277"/>
        <end position="398"/>
    </location>
</feature>
<feature type="domain" description="C2 3" evidence="2">
    <location>
        <begin position="437"/>
        <end position="562"/>
    </location>
</feature>
<feature type="domain" description="C2 4" evidence="2">
    <location>
        <begin position="605"/>
        <end position="727"/>
    </location>
</feature>
<feature type="region of interest" description="Disordered" evidence="3">
    <location>
        <begin position="187"/>
        <end position="224"/>
    </location>
</feature>
<feature type="binding site" evidence="2">
    <location>
        <position position="310"/>
    </location>
    <ligand>
        <name>Ca(2+)</name>
        <dbReference type="ChEBI" id="CHEBI:29108"/>
        <label>1</label>
    </ligand>
</feature>
<feature type="binding site" evidence="2">
    <location>
        <position position="310"/>
    </location>
    <ligand>
        <name>Ca(2+)</name>
        <dbReference type="ChEBI" id="CHEBI:29108"/>
        <label>2</label>
    </ligand>
</feature>
<feature type="binding site" evidence="2">
    <location>
        <position position="316"/>
    </location>
    <ligand>
        <name>Ca(2+)</name>
        <dbReference type="ChEBI" id="CHEBI:29108"/>
        <label>1</label>
    </ligand>
</feature>
<feature type="binding site" evidence="2">
    <location>
        <position position="363"/>
    </location>
    <ligand>
        <name>Ca(2+)</name>
        <dbReference type="ChEBI" id="CHEBI:29108"/>
        <label>1</label>
    </ligand>
</feature>
<feature type="binding site" evidence="2">
    <location>
        <position position="363"/>
    </location>
    <ligand>
        <name>Ca(2+)</name>
        <dbReference type="ChEBI" id="CHEBI:29108"/>
        <label>2</label>
    </ligand>
</feature>
<feature type="binding site" evidence="2">
    <location>
        <position position="365"/>
    </location>
    <ligand>
        <name>Ca(2+)</name>
        <dbReference type="ChEBI" id="CHEBI:29108"/>
        <label>1</label>
    </ligand>
</feature>
<feature type="binding site" evidence="2">
    <location>
        <position position="365"/>
    </location>
    <ligand>
        <name>Ca(2+)</name>
        <dbReference type="ChEBI" id="CHEBI:29108"/>
        <label>2</label>
    </ligand>
</feature>
<feature type="binding site" evidence="2">
    <location>
        <position position="371"/>
    </location>
    <ligand>
        <name>Ca(2+)</name>
        <dbReference type="ChEBI" id="CHEBI:29108"/>
        <label>2</label>
    </ligand>
</feature>
<evidence type="ECO:0000255" key="1"/>
<evidence type="ECO:0000255" key="2">
    <source>
        <dbReference type="PROSITE-ProRule" id="PRU00041"/>
    </source>
</evidence>
<evidence type="ECO:0000256" key="3">
    <source>
        <dbReference type="SAM" id="MobiDB-lite"/>
    </source>
</evidence>
<evidence type="ECO:0000269" key="4">
    <source>
    </source>
</evidence>
<evidence type="ECO:0000303" key="5">
    <source>
    </source>
</evidence>
<evidence type="ECO:0000305" key="6"/>
<evidence type="ECO:0000312" key="7">
    <source>
        <dbReference type="Araport" id="AT1G22610"/>
    </source>
</evidence>
<evidence type="ECO:0000312" key="8">
    <source>
        <dbReference type="EMBL" id="AAC25524.1"/>
    </source>
</evidence>
<evidence type="ECO:0000312" key="9">
    <source>
        <dbReference type="EMBL" id="AAF18518.1"/>
    </source>
</evidence>
<organism>
    <name type="scientific">Arabidopsis thaliana</name>
    <name type="common">Mouse-ear cress</name>
    <dbReference type="NCBI Taxonomy" id="3702"/>
    <lineage>
        <taxon>Eukaryota</taxon>
        <taxon>Viridiplantae</taxon>
        <taxon>Streptophyta</taxon>
        <taxon>Embryophyta</taxon>
        <taxon>Tracheophyta</taxon>
        <taxon>Spermatophyta</taxon>
        <taxon>Magnoliopsida</taxon>
        <taxon>eudicotyledons</taxon>
        <taxon>Gunneridae</taxon>
        <taxon>Pentapetalae</taxon>
        <taxon>rosids</taxon>
        <taxon>malvids</taxon>
        <taxon>Brassicales</taxon>
        <taxon>Brassicaceae</taxon>
        <taxon>Camelineae</taxon>
        <taxon>Arabidopsis</taxon>
    </lineage>
</organism>
<sequence length="1029" mass="118365">MNKLVVEIVDASDLMPKDGQGSASPFVEVEFDEQRQRTQTRFKDLNPQWNEKLVFNVGDLKRLNNKTVDVTVYDDRRDNQPGKFLGRVKIAGAVVPLSESESGVQRYPLDKRGLFSNIKGDIALRIYAAPIDGGDFVSPPPDFAEKVMKEDKRFESQEFQFQNQNQNQNHYEQFEDEINNMETLKPTKKKEKESRTFHSIGAHAGGGGGAPPMSQAKQAYPPPPNQPEFRSDFMRAPGPPTGAVMQMQPPRQQNPEFQLIETSPPLAARMRQSYYYRSSGDKTSSTYDLVEQMHYLYVSVVKARDLPVMDVSGSLDPYVEVKLGNYKGLTKHLEKNSNPIWKQIFAFSKERLQSNLLEVTVKDKDLLTKDDFVGRVHIDLTEVPLRVPPDSPLAPQWYRLEDKKGMKTNRGEIMLAVWMGTQADESFPDAWHSDAHRVSHSNLSNTRSKVYFSPKLYYLRIHVMEAQDLVPSDKGRVPDAIVKIQAGNQMRATRTPQMRTMNPQWHEELMFVVSEPFEDMVIVSVDDRIGPGKDEILGRVFIPVRDVPVRQEVGKMPDPRWFNLQRHSMSMEEENEKRKEKFSSKILLRVCIEAGYHVLDESTHFSSDLQPSSKHLRKPSIGILELGILSARNLMPMKGKDGRMTDPYCVAKYGNKWVRTRTLLDALAPKWNEQYTWEVHDPCTVITIGVFDNSHVNDGGDFKDQRIGKVRVRLSTLETDRVYTHFYPLLVLTPGGLKKNGELQLALRYTCTGFVNMMAQYGRPLLPKMHYIQPIPVRHIDLLRHQAMQIVATRLSRSEPPLRREVVEYMLDVDYHMFSLRRSKANFSRIMSLLSSVTLVCKWFNDICTWRNPITTCLVHVLFLILVCYPELILPTVFLYLFVIGMWNYRYRPRHPPHMDARVSQADNAHPDELDEEFDTFPTSRPADIVRMRYDRLRSVGGRVQTVVGDLATQGERIQALLSWRDPRATALFIVFALIWAVFIYVTPFQVIAIIIGLFMLRHPRFRSRMPSVPANFFKRLPAKSDMLL</sequence>
<proteinExistence type="evidence at transcript level"/>
<keyword id="KW-0106">Calcium</keyword>
<keyword id="KW-1003">Cell membrane</keyword>
<keyword id="KW-0963">Cytoplasm</keyword>
<keyword id="KW-0967">Endosome</keyword>
<keyword id="KW-0328">Glycosyltransferase</keyword>
<keyword id="KW-0472">Membrane</keyword>
<keyword id="KW-0479">Metal-binding</keyword>
<keyword id="KW-1185">Reference proteome</keyword>
<keyword id="KW-0677">Repeat</keyword>
<keyword id="KW-0808">Transferase</keyword>
<keyword id="KW-0812">Transmembrane</keyword>
<keyword id="KW-1133">Transmembrane helix</keyword>
<dbReference type="EMBL" id="AC003979">
    <property type="protein sequence ID" value="AAC25524.1"/>
    <property type="status" value="ALT_SEQ"/>
    <property type="molecule type" value="Genomic_DNA"/>
</dbReference>
<dbReference type="EMBL" id="AC006551">
    <property type="protein sequence ID" value="AAF18518.1"/>
    <property type="molecule type" value="Genomic_DNA"/>
</dbReference>
<dbReference type="EMBL" id="CP002684">
    <property type="protein sequence ID" value="AEE30260.1"/>
    <property type="molecule type" value="Genomic_DNA"/>
</dbReference>
<dbReference type="EMBL" id="AK317541">
    <property type="protein sequence ID" value="BAH20205.1"/>
    <property type="molecule type" value="mRNA"/>
</dbReference>
<dbReference type="PIR" id="F86359">
    <property type="entry name" value="F86359"/>
</dbReference>
<dbReference type="PIR" id="T00782">
    <property type="entry name" value="T00782"/>
</dbReference>
<dbReference type="RefSeq" id="NP_173675.1">
    <property type="nucleotide sequence ID" value="NM_102108.4"/>
</dbReference>
<dbReference type="SMR" id="Q9SKA3"/>
<dbReference type="FunCoup" id="Q9SKA3">
    <property type="interactions" value="287"/>
</dbReference>
<dbReference type="STRING" id="3702.Q9SKA3"/>
<dbReference type="PaxDb" id="3702-AT1G22610.1"/>
<dbReference type="ProteomicsDB" id="189731"/>
<dbReference type="EnsemblPlants" id="AT1G22610.1">
    <property type="protein sequence ID" value="AT1G22610.1"/>
    <property type="gene ID" value="AT1G22610"/>
</dbReference>
<dbReference type="GeneID" id="838867"/>
<dbReference type="Gramene" id="AT1G22610.1">
    <property type="protein sequence ID" value="AT1G22610.1"/>
    <property type="gene ID" value="AT1G22610"/>
</dbReference>
<dbReference type="KEGG" id="ath:AT1G22610"/>
<dbReference type="Araport" id="AT1G22610"/>
<dbReference type="TAIR" id="AT1G22610">
    <property type="gene designation" value="MCTP6"/>
</dbReference>
<dbReference type="eggNOG" id="ENOG502QUDY">
    <property type="taxonomic scope" value="Eukaryota"/>
</dbReference>
<dbReference type="HOGENOM" id="CLU_003762_1_0_1"/>
<dbReference type="InParanoid" id="Q9SKA3"/>
<dbReference type="OMA" id="RSKANFC"/>
<dbReference type="OrthoDB" id="67700at2759"/>
<dbReference type="PRO" id="PR:Q9SKA3"/>
<dbReference type="Proteomes" id="UP000006548">
    <property type="component" value="Chromosome 1"/>
</dbReference>
<dbReference type="ExpressionAtlas" id="Q9SKA3">
    <property type="expression patterns" value="baseline and differential"/>
</dbReference>
<dbReference type="GO" id="GO:0005829">
    <property type="term" value="C:cytosol"/>
    <property type="evidence" value="ECO:0000314"/>
    <property type="project" value="TAIR"/>
</dbReference>
<dbReference type="GO" id="GO:0010008">
    <property type="term" value="C:endosome membrane"/>
    <property type="evidence" value="ECO:0007669"/>
    <property type="project" value="UniProtKB-SubCell"/>
</dbReference>
<dbReference type="GO" id="GO:0005886">
    <property type="term" value="C:plasma membrane"/>
    <property type="evidence" value="ECO:0007669"/>
    <property type="project" value="UniProtKB-SubCell"/>
</dbReference>
<dbReference type="GO" id="GO:0009506">
    <property type="term" value="C:plasmodesma"/>
    <property type="evidence" value="ECO:0000314"/>
    <property type="project" value="TAIR"/>
</dbReference>
<dbReference type="GO" id="GO:0016757">
    <property type="term" value="F:glycosyltransferase activity"/>
    <property type="evidence" value="ECO:0007669"/>
    <property type="project" value="UniProtKB-KW"/>
</dbReference>
<dbReference type="GO" id="GO:0046872">
    <property type="term" value="F:metal ion binding"/>
    <property type="evidence" value="ECO:0007669"/>
    <property type="project" value="UniProtKB-KW"/>
</dbReference>
<dbReference type="GO" id="GO:0048574">
    <property type="term" value="P:long-day photoperiodism, flowering"/>
    <property type="evidence" value="ECO:0000315"/>
    <property type="project" value="UniProtKB"/>
</dbReference>
<dbReference type="GO" id="GO:0009911">
    <property type="term" value="P:positive regulation of flower development"/>
    <property type="evidence" value="ECO:0000315"/>
    <property type="project" value="UniProtKB"/>
</dbReference>
<dbReference type="GO" id="GO:0010228">
    <property type="term" value="P:vegetative to reproductive phase transition of meristem"/>
    <property type="evidence" value="ECO:0000315"/>
    <property type="project" value="UniProtKB"/>
</dbReference>
<dbReference type="CDD" id="cd04022">
    <property type="entry name" value="C2A_MCTP_PRT_plant"/>
    <property type="match status" value="1"/>
</dbReference>
<dbReference type="CDD" id="cd08378">
    <property type="entry name" value="C2B_MCTP_PRT_plant"/>
    <property type="match status" value="1"/>
</dbReference>
<dbReference type="CDD" id="cd04019">
    <property type="entry name" value="C2C_MCTP_PRT_plant"/>
    <property type="match status" value="1"/>
</dbReference>
<dbReference type="CDD" id="cd08379">
    <property type="entry name" value="C2D_MCTP_PRT_plant"/>
    <property type="match status" value="1"/>
</dbReference>
<dbReference type="FunFam" id="2.60.40.150:FF:000090">
    <property type="entry name" value="C2 domain-containing protein"/>
    <property type="match status" value="1"/>
</dbReference>
<dbReference type="FunFam" id="2.60.40.150:FF:000128">
    <property type="entry name" value="C2 domain-containing protein"/>
    <property type="match status" value="1"/>
</dbReference>
<dbReference type="FunFam" id="2.60.40.150:FF:000286">
    <property type="entry name" value="C2 domain-containing protein"/>
    <property type="match status" value="1"/>
</dbReference>
<dbReference type="Gene3D" id="2.60.40.150">
    <property type="entry name" value="C2 domain"/>
    <property type="match status" value="4"/>
</dbReference>
<dbReference type="InterPro" id="IPR000008">
    <property type="entry name" value="C2_dom"/>
</dbReference>
<dbReference type="InterPro" id="IPR035892">
    <property type="entry name" value="C2_domain_sf"/>
</dbReference>
<dbReference type="InterPro" id="IPR047257">
    <property type="entry name" value="C2B_MCTP_PRT_plant"/>
</dbReference>
<dbReference type="InterPro" id="IPR047258">
    <property type="entry name" value="C2C_MCTP_PRT_plant"/>
</dbReference>
<dbReference type="InterPro" id="IPR047255">
    <property type="entry name" value="C2D_MCTP_PRT_plant"/>
</dbReference>
<dbReference type="InterPro" id="IPR013583">
    <property type="entry name" value="MCTP_C"/>
</dbReference>
<dbReference type="InterPro" id="IPR047259">
    <property type="entry name" value="QUIRKY-like"/>
</dbReference>
<dbReference type="PANTHER" id="PTHR31425:SF22">
    <property type="entry name" value="MULTIPLE C2 DOMAIN AND TRANSMEMBRANE REGION PROTEIN 6"/>
    <property type="match status" value="1"/>
</dbReference>
<dbReference type="PANTHER" id="PTHR31425">
    <property type="entry name" value="PHOSPHORIBOSYLANTHRANILATE TRANSFERASE ISOFORM 1"/>
    <property type="match status" value="1"/>
</dbReference>
<dbReference type="Pfam" id="PF00168">
    <property type="entry name" value="C2"/>
    <property type="match status" value="4"/>
</dbReference>
<dbReference type="Pfam" id="PF08372">
    <property type="entry name" value="PRT_C"/>
    <property type="match status" value="1"/>
</dbReference>
<dbReference type="SMART" id="SM00239">
    <property type="entry name" value="C2"/>
    <property type="match status" value="4"/>
</dbReference>
<dbReference type="SUPFAM" id="SSF49562">
    <property type="entry name" value="C2 domain (Calcium/lipid-binding domain, CaLB)"/>
    <property type="match status" value="4"/>
</dbReference>
<dbReference type="PROSITE" id="PS50004">
    <property type="entry name" value="C2"/>
    <property type="match status" value="4"/>
</dbReference>
<reference key="1">
    <citation type="journal article" date="2000" name="Nature">
        <title>Sequence and analysis of chromosome 1 of the plant Arabidopsis thaliana.</title>
        <authorList>
            <person name="Theologis A."/>
            <person name="Ecker J.R."/>
            <person name="Palm C.J."/>
            <person name="Federspiel N.A."/>
            <person name="Kaul S."/>
            <person name="White O."/>
            <person name="Alonso J."/>
            <person name="Altafi H."/>
            <person name="Araujo R."/>
            <person name="Bowman C.L."/>
            <person name="Brooks S.Y."/>
            <person name="Buehler E."/>
            <person name="Chan A."/>
            <person name="Chao Q."/>
            <person name="Chen H."/>
            <person name="Cheuk R.F."/>
            <person name="Chin C.W."/>
            <person name="Chung M.K."/>
            <person name="Conn L."/>
            <person name="Conway A.B."/>
            <person name="Conway A.R."/>
            <person name="Creasy T.H."/>
            <person name="Dewar K."/>
            <person name="Dunn P."/>
            <person name="Etgu P."/>
            <person name="Feldblyum T.V."/>
            <person name="Feng J.-D."/>
            <person name="Fong B."/>
            <person name="Fujii C.Y."/>
            <person name="Gill J.E."/>
            <person name="Goldsmith A.D."/>
            <person name="Haas B."/>
            <person name="Hansen N.F."/>
            <person name="Hughes B."/>
            <person name="Huizar L."/>
            <person name="Hunter J.L."/>
            <person name="Jenkins J."/>
            <person name="Johnson-Hopson C."/>
            <person name="Khan S."/>
            <person name="Khaykin E."/>
            <person name="Kim C.J."/>
            <person name="Koo H.L."/>
            <person name="Kremenetskaia I."/>
            <person name="Kurtz D.B."/>
            <person name="Kwan A."/>
            <person name="Lam B."/>
            <person name="Langin-Hooper S."/>
            <person name="Lee A."/>
            <person name="Lee J.M."/>
            <person name="Lenz C.A."/>
            <person name="Li J.H."/>
            <person name="Li Y.-P."/>
            <person name="Lin X."/>
            <person name="Liu S.X."/>
            <person name="Liu Z.A."/>
            <person name="Luros J.S."/>
            <person name="Maiti R."/>
            <person name="Marziali A."/>
            <person name="Militscher J."/>
            <person name="Miranda M."/>
            <person name="Nguyen M."/>
            <person name="Nierman W.C."/>
            <person name="Osborne B.I."/>
            <person name="Pai G."/>
            <person name="Peterson J."/>
            <person name="Pham P.K."/>
            <person name="Rizzo M."/>
            <person name="Rooney T."/>
            <person name="Rowley D."/>
            <person name="Sakano H."/>
            <person name="Salzberg S.L."/>
            <person name="Schwartz J.R."/>
            <person name="Shinn P."/>
            <person name="Southwick A.M."/>
            <person name="Sun H."/>
            <person name="Tallon L.J."/>
            <person name="Tambunga G."/>
            <person name="Toriumi M.J."/>
            <person name="Town C.D."/>
            <person name="Utterback T."/>
            <person name="Van Aken S."/>
            <person name="Vaysberg M."/>
            <person name="Vysotskaia V.S."/>
            <person name="Walker M."/>
            <person name="Wu D."/>
            <person name="Yu G."/>
            <person name="Fraser C.M."/>
            <person name="Venter J.C."/>
            <person name="Davis R.W."/>
        </authorList>
    </citation>
    <scope>NUCLEOTIDE SEQUENCE [LARGE SCALE GENOMIC DNA]</scope>
    <source>
        <strain>cv. Columbia</strain>
    </source>
</reference>
<reference key="2">
    <citation type="journal article" date="2017" name="Plant J.">
        <title>Araport11: a complete reannotation of the Arabidopsis thaliana reference genome.</title>
        <authorList>
            <person name="Cheng C.Y."/>
            <person name="Krishnakumar V."/>
            <person name="Chan A.P."/>
            <person name="Thibaud-Nissen F."/>
            <person name="Schobel S."/>
            <person name="Town C.D."/>
        </authorList>
    </citation>
    <scope>GENOME REANNOTATION</scope>
    <source>
        <strain>cv. Columbia</strain>
    </source>
</reference>
<reference key="3">
    <citation type="journal article" date="2009" name="DNA Res.">
        <title>Analysis of multiple occurrences of alternative splicing events in Arabidopsis thaliana using novel sequenced full-length cDNAs.</title>
        <authorList>
            <person name="Iida K."/>
            <person name="Fukami-Kobayashi K."/>
            <person name="Toyoda A."/>
            <person name="Sakaki Y."/>
            <person name="Kobayashi M."/>
            <person name="Seki M."/>
            <person name="Shinozaki K."/>
        </authorList>
    </citation>
    <scope>NUCLEOTIDE SEQUENCE [LARGE SCALE MRNA] OF 529-1029</scope>
    <source>
        <strain>cv. Columbia</strain>
        <tissue>Flower</tissue>
        <tissue>Silique</tissue>
    </source>
</reference>
<reference key="4">
    <citation type="journal article" date="2018" name="Plant Physiol.">
        <title>Characterization of multiple C2 domain and transmembrane region proteins in Arabidopsis.</title>
        <authorList>
            <person name="Liu L."/>
            <person name="Li C."/>
            <person name="Liang Z."/>
            <person name="Yu H."/>
        </authorList>
    </citation>
    <scope>FUNCTION</scope>
    <scope>DISRUPTION PHENOTYPE</scope>
    <scope>TISSUE SPECIFICITY</scope>
    <scope>DEVELOPMENTAL STAGE</scope>
    <scope>SUBCELLULAR LOCATION</scope>
    <scope>GENE FAMILY</scope>
    <scope>NOMENCLATURE</scope>
    <source>
        <strain>cv. Columbia</strain>
    </source>
</reference>
<name>MCTP6_ARATH</name>
<protein>
    <recommendedName>
        <fullName evidence="5">Multiple C2 domain and transmembrane region protein 6</fullName>
    </recommendedName>
</protein>
<accession>Q9SKA3</accession>
<accession>B9DHI8</accession>
<accession>O80558</accession>